<proteinExistence type="evidence at protein level"/>
<name>AP22_ORYSJ</name>
<feature type="chain" id="PRO_0000445989" description="APETALA2-like protein 2">
    <location>
        <begin position="1"/>
        <end position="434"/>
    </location>
</feature>
<feature type="DNA-binding region" description="AP2/ERF 1" evidence="3">
    <location>
        <begin position="118"/>
        <end position="174"/>
    </location>
</feature>
<feature type="DNA-binding region" description="AP2/ERF 2" evidence="3">
    <location>
        <begin position="210"/>
        <end position="267"/>
    </location>
</feature>
<feature type="region of interest" description="Disordered" evidence="4">
    <location>
        <begin position="1"/>
        <end position="116"/>
    </location>
</feature>
<feature type="short sequence motif" description="Nuclear localization signal" evidence="2">
    <location>
        <begin position="106"/>
        <end position="115"/>
    </location>
</feature>
<feature type="short sequence motif" description="EAR" evidence="1">
    <location>
        <begin position="291"/>
        <end position="295"/>
    </location>
</feature>
<feature type="compositionally biased region" description="Low complexity" evidence="4">
    <location>
        <begin position="12"/>
        <end position="23"/>
    </location>
</feature>
<feature type="compositionally biased region" description="Gly residues" evidence="4">
    <location>
        <begin position="25"/>
        <end position="38"/>
    </location>
</feature>
<feature type="compositionally biased region" description="Pro residues" evidence="4">
    <location>
        <begin position="72"/>
        <end position="87"/>
    </location>
</feature>
<feature type="compositionally biased region" description="Basic residues" evidence="4">
    <location>
        <begin position="104"/>
        <end position="113"/>
    </location>
</feature>
<dbReference type="EMBL" id="AY685113">
    <property type="protein sequence ID" value="AAW78367.1"/>
    <property type="molecule type" value="mRNA"/>
</dbReference>
<dbReference type="EMBL" id="AC104433">
    <property type="protein sequence ID" value="AAO65862.1"/>
    <property type="molecule type" value="Genomic_DNA"/>
</dbReference>
<dbReference type="EMBL" id="DP000009">
    <property type="protein sequence ID" value="ABF99568.1"/>
    <property type="status" value="ALT_SEQ"/>
    <property type="molecule type" value="Genomic_DNA"/>
</dbReference>
<dbReference type="EMBL" id="AP008209">
    <property type="status" value="NOT_ANNOTATED_CDS"/>
    <property type="molecule type" value="Genomic_DNA"/>
</dbReference>
<dbReference type="SMR" id="Q84TB5"/>
<dbReference type="EnsemblPlants" id="Os03t0818800-01">
    <property type="protein sequence ID" value="Os03t0818800-01"/>
    <property type="gene ID" value="Os03g0818800"/>
</dbReference>
<dbReference type="GeneID" id="4334582"/>
<dbReference type="Gramene" id="Os03t0818800-01">
    <property type="protein sequence ID" value="Os03t0818800-01"/>
    <property type="gene ID" value="Os03g0818800"/>
</dbReference>
<dbReference type="KEGG" id="osa:4334582"/>
<dbReference type="HOGENOM" id="CLU_035462_0_0_1"/>
<dbReference type="OrthoDB" id="207175at2759"/>
<dbReference type="Proteomes" id="UP000000763">
    <property type="component" value="Chromosome 3"/>
</dbReference>
<dbReference type="ExpressionAtlas" id="Q84TB5">
    <property type="expression patterns" value="baseline and differential"/>
</dbReference>
<dbReference type="GO" id="GO:0005634">
    <property type="term" value="C:nucleus"/>
    <property type="evidence" value="ECO:0007669"/>
    <property type="project" value="UniProtKB-SubCell"/>
</dbReference>
<dbReference type="GO" id="GO:0003677">
    <property type="term" value="F:DNA binding"/>
    <property type="evidence" value="ECO:0007669"/>
    <property type="project" value="UniProtKB-KW"/>
</dbReference>
<dbReference type="GO" id="GO:0003700">
    <property type="term" value="F:DNA-binding transcription factor activity"/>
    <property type="evidence" value="ECO:0007669"/>
    <property type="project" value="InterPro"/>
</dbReference>
<dbReference type="GO" id="GO:0006355">
    <property type="term" value="P:regulation of DNA-templated transcription"/>
    <property type="evidence" value="ECO:0000315"/>
    <property type="project" value="UniProtKB"/>
</dbReference>
<dbReference type="GO" id="GO:0009909">
    <property type="term" value="P:regulation of flower development"/>
    <property type="evidence" value="ECO:0000315"/>
    <property type="project" value="UniProtKB"/>
</dbReference>
<dbReference type="GO" id="GO:0080050">
    <property type="term" value="P:regulation of seed development"/>
    <property type="evidence" value="ECO:0000315"/>
    <property type="project" value="UniProtKB"/>
</dbReference>
<dbReference type="GO" id="GO:0010228">
    <property type="term" value="P:vegetative to reproductive phase transition of meristem"/>
    <property type="evidence" value="ECO:0000315"/>
    <property type="project" value="UniProtKB"/>
</dbReference>
<dbReference type="CDD" id="cd00018">
    <property type="entry name" value="AP2"/>
    <property type="match status" value="2"/>
</dbReference>
<dbReference type="FunFam" id="3.30.730.10:FF:000002">
    <property type="entry name" value="AP2-like ethylene-responsive transcription factor"/>
    <property type="match status" value="1"/>
</dbReference>
<dbReference type="FunFam" id="3.30.730.10:FF:000004">
    <property type="entry name" value="AP2-like ethylene-responsive transcription factor"/>
    <property type="match status" value="1"/>
</dbReference>
<dbReference type="Gene3D" id="3.30.730.10">
    <property type="entry name" value="AP2/ERF domain"/>
    <property type="match status" value="2"/>
</dbReference>
<dbReference type="InterPro" id="IPR001471">
    <property type="entry name" value="AP2/ERF_dom"/>
</dbReference>
<dbReference type="InterPro" id="IPR036955">
    <property type="entry name" value="AP2/ERF_dom_sf"/>
</dbReference>
<dbReference type="InterPro" id="IPR016177">
    <property type="entry name" value="DNA-bd_dom_sf"/>
</dbReference>
<dbReference type="PANTHER" id="PTHR32467">
    <property type="entry name" value="AP2-LIKE ETHYLENE-RESPONSIVE TRANSCRIPTION FACTOR"/>
    <property type="match status" value="1"/>
</dbReference>
<dbReference type="PANTHER" id="PTHR32467:SF67">
    <property type="entry name" value="OS03G0818800 PROTEIN"/>
    <property type="match status" value="1"/>
</dbReference>
<dbReference type="Pfam" id="PF00847">
    <property type="entry name" value="AP2"/>
    <property type="match status" value="2"/>
</dbReference>
<dbReference type="PRINTS" id="PR00367">
    <property type="entry name" value="ETHRSPELEMNT"/>
</dbReference>
<dbReference type="SMART" id="SM00380">
    <property type="entry name" value="AP2"/>
    <property type="match status" value="2"/>
</dbReference>
<dbReference type="SUPFAM" id="SSF54171">
    <property type="entry name" value="DNA-binding domain"/>
    <property type="match status" value="2"/>
</dbReference>
<dbReference type="PROSITE" id="PS51032">
    <property type="entry name" value="AP2_ERF"/>
    <property type="match status" value="2"/>
</dbReference>
<sequence>MLLDLNVESPERSGTSSSSVLNSGDAGGGGGGGGGGGLFRFDLLASSPDDDECSGEQHQLPAASGIVTRQLLPPPPPAAPSPAPAWQPPRRAAEDAALAQRPVVAKKTRRGPRSRSSQYRGVTFYRRTGRWESHIWDCGKQVYLGGFDTAHAAARAYDRAAIKFRGLEADINFNLSDYEDDLKQMRNWTKEEFVHILRRQSTGFARGSSKFRGVTLHKCGRWEARMGQLLGKKYIYLGLFDTEVEAARAYDRAAIRFNGREAVTNFEPASYNVDALPDAGNEAIVDGDLDLDLRISQPNARDSKSDVATTGLQLTCDSPESSNITVHQPMGSSPQWTVHHQSTPLPPQHQRLYPSHCLGFLPNLQERPMDRRPELGPMPFPTQAWQMQAPSHLPLLHAAASSGFSAGAGAGVAAATRRQPPFPADHPFYFPPTA</sequence>
<organism>
    <name type="scientific">Oryza sativa subsp. japonica</name>
    <name type="common">Rice</name>
    <dbReference type="NCBI Taxonomy" id="39947"/>
    <lineage>
        <taxon>Eukaryota</taxon>
        <taxon>Viridiplantae</taxon>
        <taxon>Streptophyta</taxon>
        <taxon>Embryophyta</taxon>
        <taxon>Tracheophyta</taxon>
        <taxon>Spermatophyta</taxon>
        <taxon>Magnoliopsida</taxon>
        <taxon>Liliopsida</taxon>
        <taxon>Poales</taxon>
        <taxon>Poaceae</taxon>
        <taxon>BOP clade</taxon>
        <taxon>Oryzoideae</taxon>
        <taxon>Oryzeae</taxon>
        <taxon>Oryzinae</taxon>
        <taxon>Oryza</taxon>
        <taxon>Oryza sativa</taxon>
    </lineage>
</organism>
<comment type="function">
    <text evidence="1 6 8 14">Probable transcription factor (By similarity). Involved in spikelet transition (Probable). Together with SNB, controls synergistically inflorescence architecture and floral meristem establishment via the regulation of spatio-temporal expression of B- and E-function floral organ identity genes in the lodicules and of spikelet meristem genes (PubMed:22003982). Prevents lemma and palea elongation as well as grain growth (PubMed:28066457).</text>
</comment>
<comment type="subunit">
    <text evidence="1 7">May form homodimer (By similarity). Interacts with TPR2/ASP1 (PubMed:26631749).</text>
</comment>
<comment type="subcellular location">
    <subcellularLocation>
        <location evidence="3">Nucleus</location>
    </subcellularLocation>
</comment>
<comment type="tissue specificity">
    <text evidence="5 6">Highly expressed in developing panicles and in young seedlings (PubMed:20017947, PubMed:22003982). Present at low levels at all developmental stages (PubMed:22003982).</text>
</comment>
<comment type="developmental stage">
    <text evidence="6">Detected in developing branch and spikelet meristems at very early stages of inflorescence formation, and is maintained uniformly in the spikelet meristems until floral organs initiation. Present in some floral organ primordia.</text>
</comment>
<comment type="induction">
    <text evidence="6 13 14 15">Target of miR172 microRNA mediated cleavage, particularly during floral organ development.</text>
</comment>
<comment type="disruption phenotype">
    <text evidence="6">Delayed transition from spikelet meristems to floral meristems and altered floral architecture. The snb osids1 double mutant, lacking both SNB and IDS1, exhibits a decreased number of branches and spikelets within a panicle, as well as a strongly delayed transition to a floral meristem, associated with abnormal spatio-temporal expression of B- and E-function floral organ identity genes in the lodicules and of spikelet meristem genes.</text>
</comment>
<comment type="similarity">
    <text evidence="12">Belongs to the AP2/ERF transcription factor family. AP2 subfamily.</text>
</comment>
<comment type="sequence caution" evidence="12">
    <conflict type="erroneous gene model prediction">
        <sequence resource="EMBL-CDS" id="ABF99568"/>
    </conflict>
</comment>
<reference key="1">
    <citation type="submission" date="2004-07" db="EMBL/GenBank/DDBJ databases">
        <title>The AP2 subfamily genes in rice.</title>
        <authorList>
            <person name="Lee J."/>
            <person name="Lee D.Y."/>
            <person name="An G."/>
        </authorList>
    </citation>
    <scope>NUCLEOTIDE SEQUENCE [MRNA]</scope>
    <source>
        <strain>cv. Dongjin</strain>
    </source>
</reference>
<reference key="2">
    <citation type="journal article" date="2005" name="Genome Res.">
        <title>Sequence, annotation, and analysis of synteny between rice chromosome 3 and diverged grass species.</title>
        <authorList>
            <consortium name="The rice chromosome 3 sequencing consortium"/>
            <person name="Buell C.R."/>
            <person name="Yuan Q."/>
            <person name="Ouyang S."/>
            <person name="Liu J."/>
            <person name="Zhu W."/>
            <person name="Wang A."/>
            <person name="Maiti R."/>
            <person name="Haas B."/>
            <person name="Wortman J."/>
            <person name="Pertea M."/>
            <person name="Jones K.M."/>
            <person name="Kim M."/>
            <person name="Overton L."/>
            <person name="Tsitrin T."/>
            <person name="Fadrosh D."/>
            <person name="Bera J."/>
            <person name="Weaver B."/>
            <person name="Jin S."/>
            <person name="Johri S."/>
            <person name="Reardon M."/>
            <person name="Webb K."/>
            <person name="Hill J."/>
            <person name="Moffat K."/>
            <person name="Tallon L."/>
            <person name="Van Aken S."/>
            <person name="Lewis M."/>
            <person name="Utterback T."/>
            <person name="Feldblyum T."/>
            <person name="Zismann V."/>
            <person name="Iobst S."/>
            <person name="Hsiao J."/>
            <person name="de Vazeille A.R."/>
            <person name="Salzberg S.L."/>
            <person name="White O."/>
            <person name="Fraser C.M."/>
            <person name="Yu Y."/>
            <person name="Kim H."/>
            <person name="Rambo T."/>
            <person name="Currie J."/>
            <person name="Collura K."/>
            <person name="Kernodle-Thompson S."/>
            <person name="Wei F."/>
            <person name="Kudrna K."/>
            <person name="Ammiraju J.S.S."/>
            <person name="Luo M."/>
            <person name="Goicoechea J.L."/>
            <person name="Wing R.A."/>
            <person name="Henry D."/>
            <person name="Oates R."/>
            <person name="Palmer M."/>
            <person name="Pries G."/>
            <person name="Saski C."/>
            <person name="Simmons J."/>
            <person name="Soderlund C."/>
            <person name="Nelson W."/>
            <person name="de la Bastide M."/>
            <person name="Spiegel L."/>
            <person name="Nascimento L."/>
            <person name="Huang E."/>
            <person name="Preston R."/>
            <person name="Zutavern T."/>
            <person name="Palmer L."/>
            <person name="O'Shaughnessy A."/>
            <person name="Dike S."/>
            <person name="McCombie W.R."/>
            <person name="Minx P."/>
            <person name="Cordum H."/>
            <person name="Wilson R."/>
            <person name="Jin W."/>
            <person name="Lee H.R."/>
            <person name="Jiang J."/>
            <person name="Jackson S."/>
        </authorList>
    </citation>
    <scope>NUCLEOTIDE SEQUENCE [LARGE SCALE GENOMIC DNA]</scope>
    <source>
        <strain>cv. Nipponbare</strain>
    </source>
</reference>
<reference key="3">
    <citation type="journal article" date="2005" name="Nature">
        <title>The map-based sequence of the rice genome.</title>
        <authorList>
            <consortium name="International rice genome sequencing project (IRGSP)"/>
        </authorList>
    </citation>
    <scope>NUCLEOTIDE SEQUENCE [LARGE SCALE GENOMIC DNA]</scope>
    <source>
        <strain>cv. Nipponbare</strain>
    </source>
</reference>
<reference key="4">
    <citation type="journal article" date="2008" name="Nucleic Acids Res.">
        <title>The rice annotation project database (RAP-DB): 2008 update.</title>
        <authorList>
            <consortium name="The rice annotation project (RAP)"/>
        </authorList>
    </citation>
    <scope>GENOME REANNOTATION</scope>
    <source>
        <strain>cv. Nipponbare</strain>
    </source>
</reference>
<reference key="5">
    <citation type="journal article" date="2009" name="BMC Plant Biol.">
        <title>Over-expression of miR172 causes loss of spikelet determinacy and floral organ abnormalities in rice (Oryza sativa).</title>
        <authorList>
            <person name="Zhu Q.-H."/>
            <person name="Upadhyaya N.M."/>
            <person name="Gubler F."/>
            <person name="Helliwell C.A."/>
        </authorList>
    </citation>
    <scope>TISSUE SPECIFICITY</scope>
    <scope>REPRESSION BY MIR172</scope>
</reference>
<reference key="6">
    <citation type="journal article" date="2012" name="Plant J.">
        <title>Two AP2 family genes, SUPERNUMERARY BRACT (SNB) and OsINDETERMINATE SPIKELET 1 (OsIDS1), synergistically control inflorescence architecture and floral meristem establishment in rice.</title>
        <authorList>
            <person name="Lee D.Y."/>
            <person name="An G."/>
        </authorList>
    </citation>
    <scope>FUNCTION</scope>
    <scope>DISRUPTION PHENOTYPE</scope>
    <scope>REPRESSION BY MIR172</scope>
    <scope>TISSUE SPECIFICITY</scope>
    <scope>DEVELOPMENTAL STAGE</scope>
</reference>
<reference key="7">
    <citation type="journal article" date="2015" name="Proc. Natl. Acad. Sci. U.S.A.">
        <title>Coordinated regulation of vegetative and reproductive branching in rice.</title>
        <authorList>
            <person name="Wang L."/>
            <person name="Sun S."/>
            <person name="Jin J."/>
            <person name="Fu D."/>
            <person name="Yang X."/>
            <person name="Weng X."/>
            <person name="Xu C."/>
            <person name="Li X."/>
            <person name="Xiao J."/>
            <person name="Zhang Q."/>
        </authorList>
    </citation>
    <scope>FUNCTION</scope>
    <scope>REPRESSION BY MIR172</scope>
    <scope>INTERACTION WITH TPR2/ASP1</scope>
</reference>
<reference key="8">
    <citation type="journal article" date="2016" name="Front. Plant Sci.">
        <title>OsMADS1 represses microRNA172 in elongation of palea/lemma development in rice.</title>
        <authorList>
            <person name="Dai Z."/>
            <person name="Wang J."/>
            <person name="Zhu M."/>
            <person name="Miao X."/>
            <person name="Shi Z."/>
        </authorList>
    </citation>
    <scope>FUNCTION</scope>
    <scope>REPRESSION BY MIR172</scope>
    <scope>GENE FAMILY</scope>
    <scope>NOMENCLATURE</scope>
    <source>
        <strain>cv. Zhonghua 11</strain>
    </source>
</reference>
<accession>Q84TB5</accession>
<accession>Q10BG6</accession>
<gene>
    <name evidence="10" type="primary">AP2-2</name>
    <name evidence="11" type="synonym">AP2D2</name>
    <name evidence="9" type="synonym">IDS1</name>
    <name evidence="12" type="ordered locus">LOC_Os03g60430</name>
    <name evidence="12" type="ordered locus">Os03g0818800</name>
    <name evidence="16" type="ORF">OJ1754_E06.6</name>
</gene>
<protein>
    <recommendedName>
        <fullName evidence="10 11">APETALA2-like protein 2</fullName>
    </recommendedName>
    <alternativeName>
        <fullName evidence="9">Protein INDETERMINATE SPIKELET 1</fullName>
        <shortName evidence="9">OsIDS1</shortName>
    </alternativeName>
</protein>
<keyword id="KW-0238">DNA-binding</keyword>
<keyword id="KW-0539">Nucleus</keyword>
<keyword id="KW-0677">Repeat</keyword>
<keyword id="KW-0804">Transcription</keyword>
<keyword id="KW-0805">Transcription regulation</keyword>
<evidence type="ECO:0000250" key="1">
    <source>
        <dbReference type="UniProtKB" id="P47927"/>
    </source>
</evidence>
<evidence type="ECO:0000255" key="2"/>
<evidence type="ECO:0000255" key="3">
    <source>
        <dbReference type="PROSITE-ProRule" id="PRU00366"/>
    </source>
</evidence>
<evidence type="ECO:0000256" key="4">
    <source>
        <dbReference type="SAM" id="MobiDB-lite"/>
    </source>
</evidence>
<evidence type="ECO:0000269" key="5">
    <source>
    </source>
</evidence>
<evidence type="ECO:0000269" key="6">
    <source>
    </source>
</evidence>
<evidence type="ECO:0000269" key="7">
    <source>
    </source>
</evidence>
<evidence type="ECO:0000269" key="8">
    <source>
    </source>
</evidence>
<evidence type="ECO:0000303" key="9">
    <source>
    </source>
</evidence>
<evidence type="ECO:0000303" key="10">
    <source>
    </source>
</evidence>
<evidence type="ECO:0000303" key="11">
    <source ref="1"/>
</evidence>
<evidence type="ECO:0000305" key="12"/>
<evidence type="ECO:0000305" key="13">
    <source>
    </source>
</evidence>
<evidence type="ECO:0000305" key="14">
    <source>
    </source>
</evidence>
<evidence type="ECO:0000305" key="15">
    <source>
    </source>
</evidence>
<evidence type="ECO:0000312" key="16">
    <source>
        <dbReference type="EMBL" id="AAO65862.1"/>
    </source>
</evidence>